<proteinExistence type="inferred from homology"/>
<dbReference type="EMBL" id="CP001233">
    <property type="protein sequence ID" value="ACP05969.1"/>
    <property type="molecule type" value="Genomic_DNA"/>
</dbReference>
<dbReference type="RefSeq" id="WP_000983161.1">
    <property type="nucleotide sequence ID" value="NC_012578.1"/>
</dbReference>
<dbReference type="SMR" id="C3LN43"/>
<dbReference type="KEGG" id="vcm:VCM66_1660"/>
<dbReference type="HOGENOM" id="CLU_077650_4_0_6"/>
<dbReference type="Proteomes" id="UP000001217">
    <property type="component" value="Chromosome I"/>
</dbReference>
<dbReference type="GO" id="GO:0005737">
    <property type="term" value="C:cytoplasm"/>
    <property type="evidence" value="ECO:0007669"/>
    <property type="project" value="UniProtKB-SubCell"/>
</dbReference>
<dbReference type="GO" id="GO:0051259">
    <property type="term" value="P:protein complex oligomerization"/>
    <property type="evidence" value="ECO:0007669"/>
    <property type="project" value="InterPro"/>
</dbReference>
<dbReference type="GO" id="GO:0006457">
    <property type="term" value="P:protein folding"/>
    <property type="evidence" value="ECO:0007669"/>
    <property type="project" value="UniProtKB-UniRule"/>
</dbReference>
<dbReference type="Gene3D" id="1.20.120.1820">
    <property type="match status" value="1"/>
</dbReference>
<dbReference type="Gene3D" id="1.20.1280.20">
    <property type="entry name" value="HscB, C-terminal domain"/>
    <property type="match status" value="1"/>
</dbReference>
<dbReference type="HAMAP" id="MF_01150">
    <property type="entry name" value="TorD"/>
    <property type="match status" value="1"/>
</dbReference>
<dbReference type="InterPro" id="IPR023069">
    <property type="entry name" value="Chaperone_TorD"/>
</dbReference>
<dbReference type="InterPro" id="IPR020945">
    <property type="entry name" value="DMSO/NO3_reduct_chaperone"/>
</dbReference>
<dbReference type="InterPro" id="IPR036386">
    <property type="entry name" value="HscB_C_sf"/>
</dbReference>
<dbReference type="InterPro" id="IPR036411">
    <property type="entry name" value="TorD-like_sf"/>
</dbReference>
<dbReference type="InterPro" id="IPR050289">
    <property type="entry name" value="TorD/DmsD_chaperones"/>
</dbReference>
<dbReference type="NCBIfam" id="NF003442">
    <property type="entry name" value="PRK04976.1"/>
    <property type="match status" value="1"/>
</dbReference>
<dbReference type="PANTHER" id="PTHR34227:SF11">
    <property type="entry name" value="CHAPERONE PROTEIN TORD"/>
    <property type="match status" value="1"/>
</dbReference>
<dbReference type="PANTHER" id="PTHR34227">
    <property type="entry name" value="CHAPERONE PROTEIN YCDY"/>
    <property type="match status" value="1"/>
</dbReference>
<dbReference type="Pfam" id="PF02613">
    <property type="entry name" value="Nitrate_red_del"/>
    <property type="match status" value="1"/>
</dbReference>
<dbReference type="SUPFAM" id="SSF89155">
    <property type="entry name" value="TorD-like"/>
    <property type="match status" value="1"/>
</dbReference>
<comment type="function">
    <text evidence="1">Involved in the biogenesis of TorA. Acts on TorA before the insertion of the molybdenum cofactor and, as a result, probably favors a conformation of the apoenzyme that is competent for acquiring the cofactor.</text>
</comment>
<comment type="subcellular location">
    <subcellularLocation>
        <location evidence="1">Cytoplasm</location>
    </subcellularLocation>
</comment>
<comment type="similarity">
    <text evidence="1">Belongs to the TorD/DmsD family. TorD subfamily.</text>
</comment>
<protein>
    <recommendedName>
        <fullName evidence="1">Chaperone protein TorD</fullName>
    </recommendedName>
</protein>
<evidence type="ECO:0000255" key="1">
    <source>
        <dbReference type="HAMAP-Rule" id="MF_01150"/>
    </source>
</evidence>
<reference key="1">
    <citation type="journal article" date="2008" name="PLoS ONE">
        <title>A recalibrated molecular clock and independent origins for the cholera pandemic clones.</title>
        <authorList>
            <person name="Feng L."/>
            <person name="Reeves P.R."/>
            <person name="Lan R."/>
            <person name="Ren Y."/>
            <person name="Gao C."/>
            <person name="Zhou Z."/>
            <person name="Ren Y."/>
            <person name="Cheng J."/>
            <person name="Wang W."/>
            <person name="Wang J."/>
            <person name="Qian W."/>
            <person name="Li D."/>
            <person name="Wang L."/>
        </authorList>
    </citation>
    <scope>NUCLEOTIDE SEQUENCE [LARGE SCALE GENOMIC DNA]</scope>
    <source>
        <strain>M66-2</strain>
    </source>
</reference>
<accession>C3LN43</accession>
<feature type="chain" id="PRO_1000164172" description="Chaperone protein TorD">
    <location>
        <begin position="1"/>
        <end position="220"/>
    </location>
</feature>
<sequence length="220" mass="25096">MMQELKILNEKRAEIYWWLSSLFFKELSEQDIARYHSAEVRTFLSGLADEQSLNREVKHLVEALNRLQDRQDAQLELAADFCDLFLKSDRDSALPYASVYADQGLLNGKPAQQMRELLSAHGVKVEQNLNEPEDHLAIQLDFLAHLAISANQIEHSAQLSLALQAQSDFISQHLLTWLPAFAERCTQFDAFGLYSAAARLALAFIQQDKHCLDELIQETH</sequence>
<organism>
    <name type="scientific">Vibrio cholerae serotype O1 (strain M66-2)</name>
    <dbReference type="NCBI Taxonomy" id="579112"/>
    <lineage>
        <taxon>Bacteria</taxon>
        <taxon>Pseudomonadati</taxon>
        <taxon>Pseudomonadota</taxon>
        <taxon>Gammaproteobacteria</taxon>
        <taxon>Vibrionales</taxon>
        <taxon>Vibrionaceae</taxon>
        <taxon>Vibrio</taxon>
    </lineage>
</organism>
<name>TORD_VIBCM</name>
<gene>
    <name evidence="1" type="primary">torD</name>
    <name type="ordered locus">VCM66_1660</name>
</gene>
<keyword id="KW-0143">Chaperone</keyword>
<keyword id="KW-0963">Cytoplasm</keyword>